<sequence>MSQSYINVIGAGLAGSEAAYQIAKRGIPVKLYEMRGVKATPQHKTTHFAELVCSNSFRGDSLTNAVGLLKEELRRLDSIIMRAGEAHRVPAGGAMAVDREGYAKAVTAELEAHPLVEIIREEVTDIPSDAITVIATGPLTSDSLAEKIHALNGGAGFYFYDAAAPIVDKSTINMDRVYLKSRYDKGEAAYLNCPMTKEEFMAFHEALTTAEEAPLNAFEKEKYFEGCMPIEVMAKRGIKTMLYGPMKPVGLEYPDDYKGPRDGDFKTPYAVVQLRQDNAAGSLYNIVGFQTHLKWGEQKRVFQMIPGLEHAEFVRYGVMHRNSYMDSPKLLTQGFQSRANHRLFFAGQMTGVEGYVESAASGLVAGINAARLFKEEEPLVFPNTTAIGSLPYYITHADSKHFQPMNVNFGIIKELDGPRIRDKKERYEAIAKRALADLAAYLTV</sequence>
<comment type="function">
    <text evidence="1">Catalyzes the folate-dependent formation of 5-methyl-uridine at position 54 (M-5-U54) in all tRNAs.</text>
</comment>
<comment type="catalytic activity">
    <reaction evidence="1">
        <text>uridine(54) in tRNA + (6R)-5,10-methylene-5,6,7,8-tetrahydrofolate + NADH + H(+) = 5-methyluridine(54) in tRNA + (6S)-5,6,7,8-tetrahydrofolate + NAD(+)</text>
        <dbReference type="Rhea" id="RHEA:16873"/>
        <dbReference type="Rhea" id="RHEA-COMP:10167"/>
        <dbReference type="Rhea" id="RHEA-COMP:10193"/>
        <dbReference type="ChEBI" id="CHEBI:15378"/>
        <dbReference type="ChEBI" id="CHEBI:15636"/>
        <dbReference type="ChEBI" id="CHEBI:57453"/>
        <dbReference type="ChEBI" id="CHEBI:57540"/>
        <dbReference type="ChEBI" id="CHEBI:57945"/>
        <dbReference type="ChEBI" id="CHEBI:65315"/>
        <dbReference type="ChEBI" id="CHEBI:74447"/>
        <dbReference type="EC" id="2.1.1.74"/>
    </reaction>
</comment>
<comment type="catalytic activity">
    <reaction evidence="1">
        <text>uridine(54) in tRNA + (6R)-5,10-methylene-5,6,7,8-tetrahydrofolate + NADPH + H(+) = 5-methyluridine(54) in tRNA + (6S)-5,6,7,8-tetrahydrofolate + NADP(+)</text>
        <dbReference type="Rhea" id="RHEA:62372"/>
        <dbReference type="Rhea" id="RHEA-COMP:10167"/>
        <dbReference type="Rhea" id="RHEA-COMP:10193"/>
        <dbReference type="ChEBI" id="CHEBI:15378"/>
        <dbReference type="ChEBI" id="CHEBI:15636"/>
        <dbReference type="ChEBI" id="CHEBI:57453"/>
        <dbReference type="ChEBI" id="CHEBI:57783"/>
        <dbReference type="ChEBI" id="CHEBI:58349"/>
        <dbReference type="ChEBI" id="CHEBI:65315"/>
        <dbReference type="ChEBI" id="CHEBI:74447"/>
        <dbReference type="EC" id="2.1.1.74"/>
    </reaction>
</comment>
<comment type="cofactor">
    <cofactor evidence="1">
        <name>FAD</name>
        <dbReference type="ChEBI" id="CHEBI:57692"/>
    </cofactor>
</comment>
<comment type="subcellular location">
    <subcellularLocation>
        <location evidence="1">Cytoplasm</location>
    </subcellularLocation>
</comment>
<comment type="similarity">
    <text evidence="1">Belongs to the MnmG family. TrmFO subfamily.</text>
</comment>
<organism>
    <name type="scientific">Streptococcus equi subsp. zooepidemicus (strain H70)</name>
    <dbReference type="NCBI Taxonomy" id="553483"/>
    <lineage>
        <taxon>Bacteria</taxon>
        <taxon>Bacillati</taxon>
        <taxon>Bacillota</taxon>
        <taxon>Bacilli</taxon>
        <taxon>Lactobacillales</taxon>
        <taxon>Streptococcaceae</taxon>
        <taxon>Streptococcus</taxon>
    </lineage>
</organism>
<evidence type="ECO:0000255" key="1">
    <source>
        <dbReference type="HAMAP-Rule" id="MF_01037"/>
    </source>
</evidence>
<proteinExistence type="inferred from homology"/>
<protein>
    <recommendedName>
        <fullName evidence="1">Methylenetetrahydrofolate--tRNA-(uracil-5-)-methyltransferase TrmFO</fullName>
        <ecNumber evidence="1">2.1.1.74</ecNumber>
    </recommendedName>
    <alternativeName>
        <fullName evidence="1">Folate-dependent tRNA (uracil-5-)-methyltransferase</fullName>
    </alternativeName>
    <alternativeName>
        <fullName evidence="1">Folate-dependent tRNA(M-5-U54)-methyltransferase</fullName>
    </alternativeName>
</protein>
<feature type="chain" id="PRO_1000213385" description="Methylenetetrahydrofolate--tRNA-(uracil-5-)-methyltransferase TrmFO">
    <location>
        <begin position="1"/>
        <end position="444"/>
    </location>
</feature>
<feature type="binding site" evidence="1">
    <location>
        <begin position="10"/>
        <end position="15"/>
    </location>
    <ligand>
        <name>FAD</name>
        <dbReference type="ChEBI" id="CHEBI:57692"/>
    </ligand>
</feature>
<reference key="1">
    <citation type="journal article" date="2009" name="PLoS Pathog.">
        <title>Genomic evidence for the evolution of Streptococcus equi: host restriction, increased virulence, and genetic exchange with human pathogens.</title>
        <authorList>
            <person name="Holden M.T.G."/>
            <person name="Heather Z."/>
            <person name="Paillot R."/>
            <person name="Steward K.F."/>
            <person name="Webb K."/>
            <person name="Ainslie F."/>
            <person name="Jourdan T."/>
            <person name="Bason N.C."/>
            <person name="Holroyd N.E."/>
            <person name="Mungall K."/>
            <person name="Quail M.A."/>
            <person name="Sanders M."/>
            <person name="Simmonds M."/>
            <person name="Willey D."/>
            <person name="Brooks K."/>
            <person name="Aanensen D.M."/>
            <person name="Spratt B.G."/>
            <person name="Jolley K.A."/>
            <person name="Maiden M.C.J."/>
            <person name="Kehoe M."/>
            <person name="Chanter N."/>
            <person name="Bentley S.D."/>
            <person name="Robinson C."/>
            <person name="Maskell D.J."/>
            <person name="Parkhill J."/>
            <person name="Waller A.S."/>
        </authorList>
    </citation>
    <scope>NUCLEOTIDE SEQUENCE [LARGE SCALE GENOMIC DNA]</scope>
    <source>
        <strain>H70</strain>
    </source>
</reference>
<accession>C0MFF9</accession>
<dbReference type="EC" id="2.1.1.74" evidence="1"/>
<dbReference type="EMBL" id="FM204884">
    <property type="protein sequence ID" value="CAW99295.1"/>
    <property type="molecule type" value="Genomic_DNA"/>
</dbReference>
<dbReference type="SMR" id="C0MFF9"/>
<dbReference type="KEGG" id="seq:SZO_09860"/>
<dbReference type="PATRIC" id="fig|40041.11.peg.1046"/>
<dbReference type="eggNOG" id="COG1206">
    <property type="taxonomic scope" value="Bacteria"/>
</dbReference>
<dbReference type="HOGENOM" id="CLU_033057_1_0_9"/>
<dbReference type="Proteomes" id="UP000001368">
    <property type="component" value="Chromosome"/>
</dbReference>
<dbReference type="GO" id="GO:0005829">
    <property type="term" value="C:cytosol"/>
    <property type="evidence" value="ECO:0007669"/>
    <property type="project" value="TreeGrafter"/>
</dbReference>
<dbReference type="GO" id="GO:0050660">
    <property type="term" value="F:flavin adenine dinucleotide binding"/>
    <property type="evidence" value="ECO:0007669"/>
    <property type="project" value="UniProtKB-UniRule"/>
</dbReference>
<dbReference type="GO" id="GO:0047151">
    <property type="term" value="F:tRNA (uracil(54)-C5)-methyltransferase activity, 5,10-methylenetetrahydrofolate-dependent"/>
    <property type="evidence" value="ECO:0007669"/>
    <property type="project" value="UniProtKB-UniRule"/>
</dbReference>
<dbReference type="GO" id="GO:0030488">
    <property type="term" value="P:tRNA methylation"/>
    <property type="evidence" value="ECO:0007669"/>
    <property type="project" value="TreeGrafter"/>
</dbReference>
<dbReference type="GO" id="GO:0002098">
    <property type="term" value="P:tRNA wobble uridine modification"/>
    <property type="evidence" value="ECO:0007669"/>
    <property type="project" value="TreeGrafter"/>
</dbReference>
<dbReference type="FunFam" id="3.50.50.60:FF:000035">
    <property type="entry name" value="Methylenetetrahydrofolate--tRNA-(uracil-5-)-methyltransferase TrmFO"/>
    <property type="match status" value="1"/>
</dbReference>
<dbReference type="FunFam" id="3.50.50.60:FF:000040">
    <property type="entry name" value="Methylenetetrahydrofolate--tRNA-(uracil-5-)-methyltransferase TrmFO"/>
    <property type="match status" value="1"/>
</dbReference>
<dbReference type="Gene3D" id="3.50.50.60">
    <property type="entry name" value="FAD/NAD(P)-binding domain"/>
    <property type="match status" value="2"/>
</dbReference>
<dbReference type="HAMAP" id="MF_01037">
    <property type="entry name" value="TrmFO"/>
    <property type="match status" value="1"/>
</dbReference>
<dbReference type="InterPro" id="IPR036188">
    <property type="entry name" value="FAD/NAD-bd_sf"/>
</dbReference>
<dbReference type="InterPro" id="IPR002218">
    <property type="entry name" value="MnmG-rel"/>
</dbReference>
<dbReference type="InterPro" id="IPR020595">
    <property type="entry name" value="MnmG-rel_CS"/>
</dbReference>
<dbReference type="InterPro" id="IPR040131">
    <property type="entry name" value="MnmG_N"/>
</dbReference>
<dbReference type="InterPro" id="IPR004417">
    <property type="entry name" value="TrmFO"/>
</dbReference>
<dbReference type="NCBIfam" id="TIGR00137">
    <property type="entry name" value="gid_trmFO"/>
    <property type="match status" value="1"/>
</dbReference>
<dbReference type="NCBIfam" id="NF003739">
    <property type="entry name" value="PRK05335.1"/>
    <property type="match status" value="1"/>
</dbReference>
<dbReference type="PANTHER" id="PTHR11806">
    <property type="entry name" value="GLUCOSE INHIBITED DIVISION PROTEIN A"/>
    <property type="match status" value="1"/>
</dbReference>
<dbReference type="PANTHER" id="PTHR11806:SF2">
    <property type="entry name" value="METHYLENETETRAHYDROFOLATE--TRNA-(URACIL-5-)-METHYLTRANSFERASE TRMFO"/>
    <property type="match status" value="1"/>
</dbReference>
<dbReference type="Pfam" id="PF01134">
    <property type="entry name" value="GIDA"/>
    <property type="match status" value="1"/>
</dbReference>
<dbReference type="SUPFAM" id="SSF51905">
    <property type="entry name" value="FAD/NAD(P)-binding domain"/>
    <property type="match status" value="1"/>
</dbReference>
<dbReference type="PROSITE" id="PS01281">
    <property type="entry name" value="GIDA_2"/>
    <property type="match status" value="1"/>
</dbReference>
<keyword id="KW-0963">Cytoplasm</keyword>
<keyword id="KW-0274">FAD</keyword>
<keyword id="KW-0285">Flavoprotein</keyword>
<keyword id="KW-0489">Methyltransferase</keyword>
<keyword id="KW-0520">NAD</keyword>
<keyword id="KW-0521">NADP</keyword>
<keyword id="KW-0808">Transferase</keyword>
<keyword id="KW-0819">tRNA processing</keyword>
<name>TRMFO_STRS7</name>
<gene>
    <name evidence="1" type="primary">trmFO</name>
    <name type="ordered locus">SZO_09860</name>
</gene>